<sequence>MSRFSCIFPTLTDGYVPNLDQTRAAGRRTYTIDRRGWTAPSSQTESHILAAWGLVLSSYVGTDEVAFYIVPTTGPDTTALAELKVEGDMSRRSLINAAEQLLHPGPVGAGQVSGESANTIITFEKDIESLFVTQAEAANVGTAMAQALAEVGADDHNRLIKNLNLMSPTHLESIWQFNANVPGMWEECFHDVIERRAANRPHSLAVDAWDMKLTYADLVREARLLAAYLQHRGVRPGSVVPISFERSGAALVAMLAVSKAGGAFVSVPPTLPAGRLDAILEVIEAPFVVTWSKYEPFWAERLPTLPIDSYPKPSADATVKTLGKPEDLFYVIFTSGSTGRPKGCMLSHSNWLNGALRNAPSWKYGPESRVLQMLSHTFDMSLLEICTSLGSGACVCVPRTEEIETSVSDAINRWQVNHVIMTPSLARSLRRDDVPGLKTMCLGGEAFPREIVTMWSERINLWQFYGPSECSINSSSRPITRPDADPLNIGPPNSAACWVVDTQDYNKLVPVGAIGELLVSGPIVGMGYLKNPIKTAEAFLDEVGFVAKDDPQFGGFRFYRTGDLVRWNSDGTITFCGRADTQVKLNGQRLELAEVEYQLGLEAGVQYAIAMAPQSGRCKNNLIAVLTVKCGGASNQGNADDEIPLLDRHDPIVQQTVKKLRSQLQHALPRYMVPTIWAFVGRMPMSPSGKIDRVQLRNWVQEMSQETFDAITGRSFEAEDHVLGLSQLEQEIQLAWAEALGLSAAEVGLQQPFVALGGDSIKALDAVARCRARQIKISMVHILSCEGVREASSLAEVQETPAHQVAEIAVDYSDLWTRLSTEYDISKLGVTQVEEVEDVFPCTTMQEGMFLGQIRRPGAYHMRFFHRVQLKGGSLPTVERIQQAWASLVERHPSLRTVFVDDLSSEAIYHSVVLRSVPMELTMREVPRDLNPESALAMFTEELVPFRPNAPLHRMLLLTCRGRVPYLMLEISHVIMDGYALSVFRREFIRACSSTASLPRGPDYRMFANYHRTRQTDESAKYWTNYLADCVPCHIPTDPLSVPTDASPEWPRTLQRRDFGFDNSVAFLQRCKERQVTLACAIRAAWALVLRAYTQSRDVCFGYVSSGRNVPVPEVETIFGLCLSMQVCRAKLSEASTIASLARKIQEDYVASLPFQHYPLAEAQRGLKQTHGQGLFNTAISMEWVPPTAEDEDALLDLEEIREQDDPTEYDIAISVDIHEGHIKLGFLYWPNLSDFQITHLAEALQGAMNCFAFQPDVALNTLTLLQASDLCSTLTNGPTLLPLEAVRGNVISMIDRWVTRQPESPAIDGWDGSLTYKQLHEQSSWVARNLLHQGVKLGDRILVCADRSSRTVVTILGVVRAGCVLVLSNPTDPEKRLQWLAHKCNATLVVADPAYEERFATSGARVFSTTSVCAPAAWDYEFSALDDQDLVSILFTSGSTGTPKGILMDHGALATSVLLGHGRTLRFSRHTRMLHFASLTFDAALAEIFTTLAHGGCICVPCEEDRLSDVSGCISRFAVNTAMLTPSVGRLLDPEALPTLKALAMIGEPMSRLDVERFAPVLDLYNGAGPTETSIMVTIAGPMKPTDEPVNLGYAVAGVRLWVTEAENPNRLAPLGAVGELIVEGRLVTRGYLDDPARTRESFLPNLPWLPSQHALYRTGDLVRYAEDGSLRYMGRKDTQVKLRGQRIELQEVEYHLRKSLQQAQVVVEMVIPEGKIRAQASLVAFVSGLTAADVESSSARNFDQSMPMSQIALPGSTIQALEEALPRYMIPSVYFALDTIPLSVNGKADRRRLREIGAALLVSSTAHKNTVDGKSEPVKWTASSKLELTLLELWTTTLGLEAETIYGDDSFFELGGDSVSAMKLVATARDRFKLSLSVPQMFRHPTIHQLAAILGEATGQPESSASSTTEEGFTFSTPDDSSTNDGVDDDFLRLATAQLAQLAQEKGKKVDIAALLKQLQGGSSSCKTPSVSSSSSSSSSRKKKSAKVVSPVEAPAPVPVPFSLLDGGADVVEKIRAQAVEQCKILPGDIEDIYPATALQEGMMALMARTPGVYTTTLTCELPERVNLARLHSAWDKAAEAHPILRTRIILTENNTAVQVVQRAKELPWDAYSLQDGDPLPDLTSNMTLGSTLLRLAEIHRQNQPRMLLVAIHHALYDGWSMPLLKQAVEDVYHGQELWPQPFTPFINYLNEGKPAAQGYWTAHLDGFAGSVFPNLPSINHHIQPTERRTRSLAVPTAPPGSQYTMATKIQAAWAVTVSRYAEAEDIVFGTVSTGRSAPVPSIDRMVGPTITTVPVRISLGNQAERLTSLLQRVQEDGWNRMDHEHLGLQHIRRLGESAAAACNLQTLLVIQPREEPRAKSISTLLSGLQDVAELKGVDTYPLMLVCEPDGVSLHLTAVFDPAVLDAVMLDRMLAHWELVLNQIWSEPDMAVMGLDGVSYRDKQTLVRWNAGEKIADGCAHDAVYEWSVRTPHAPAVFAWDGKWTYEELEKCSSLIASQVLVHGVSSGDFVALYHEKSRWAAAAILAVFKAGGILVTLDPAHPKDRIKDILDQARPRLVLTSQSLLDEARELETPVMVVQFAASQPMPGECFPLPTVSPTQAAYAPFTSGSTGRPKGIPLEHRGLAASTASVARACLLRPASRVLHFASFAFDASMMEHLIAWHAGSCLCIPVETVRQTDLARCIRDFEVTWAFLTPSCLRLISPDDVQSLEALGLGGESMTPEDIFIWGPRLRQIVQLYGPAECSIVAALTEVTKPSENRLIGRPNACRCWVVDPHSPDRLAPLGAVGELVIEGITVGRGYIDDPERTTQAFIPPPTWIQTLYPNEQQPSRLYRTGDLVRYAGTDGKLTFIGRRDGQLKLHGQRIELADVEAHLRPLIPGTQKVVVEMVHSVGNHHPLLAAFVEEILTSQDQVEQVVNLLHPSQTQCALNVKAIDSALSQTVPQYMIPSMYLHISRLPLSASGKLNRRHLRRLVAEFPRQRLSEYAAGSGLAVPNRPATAQEREMQAIWARVLSVDPDTIGVNEDFFRIGGDSISGMQVATRCNAAGMHITSADLFQHRTIEQLMRHLSANGKTGSASISLPPEPVDEWVPLAPIQQLFFEIAPQGPDHFNQSLLLRTSRRVSAEKLAGGLDILVGRHSMLRARFCRDDSGQWSQQVRSRGPYPASAFYRLTTHNHIAPELLSSLLAASQMALSIQEGPLLAVDLVNLTDDTQLVYLVAHHLIIDLVSWRILHAELEEYLQTGSFASTTGSVPFLTWSRAQAEYSANHLTPTLPLPGFQEANDGFDASRYWGISCESNTFGQTSTSTFTLDQTVTDQLFGPANNVLDTRPAEILQAALWYSFTQSLTDRPGPSIYVEGHGREPWTGSIDLSGTVGWFTTMSPLVSAPWDSLSQTSMRDFLDALSYIKDQRRRIPANGWAYFTSRYLNDEGKVAYGRMKPVVEILFNYMGQYQEMNREDAILQLAGDGIQSGTGAADVADNVPRFSLIDVSAFISNGCLTFQFILPKSLQQDSRLQGCFQEYERTLVAAANSLSTEGPRKTLADFPLMPALTYDQLSQCLDHTLPSMGLCARDVVDIYPCSPVQQGMLLAQLRDRQAYQQRFRFQVKSRGSTDRLTLEKLKDAWTEVINRHDILRTLLLPVSDYSHLDQVVMAPGSLQHLVRINAMDTNPTQGLPHSINITSDSTGTVICEWNVSHALVDAMSIAVIQQEVNEALEGSLGQHQKTPRYADYIQWLSLQDNTETQAYWKKYLEGVEPCLFPKLASSTDKVNPEGTISAIRATWTRDSRLDKLCHTHGITLTNLFHIVWSLLLSAYLGTDKVCFGYTTLGRDVPVDGVEKMVGPLVNVIATTIQLQEDDSILDALLTHQTHLSNSLQHQHYALADVYASLGLVGSQLFNTIVSLQDISHFDANDERPTRVEMLPANDVSEYDVALNIGVDQSSIQVVCSYRTLSLSVEQADALLRTTSHVLDEILRDPKQPLRDLEVISPQCKEQLVKWNAAMPAPTDEYIHEKIQDQCRLHSSREAACAWDGIFTFAEVDDLSSRLAARLIRMGVTSGHIIPIYSPKSRWTVIAILGVLKTGAAFTLLETSHPTARLRVICNEIKADIIIAPASHAVPAATLAPILVVLDSITSMSPQESDLLPAVGMPPAAEALAYLIFTSGSTGNPKGVMVTHQNLCSNASIMTTSVNMTSDSRVLHFASHAFDACLWEIFGALFAGACLIIPSESETKEDLAGCIERMVVTWAFLTPSVARILKPEALPSLRNLVLGGEPIAASDLDMWRGHVQVVCAYGPTETAILASTTSPSTFPSDGKDIGVPTGSSLWIVDKQNYNKLAPHGATGELLIEGPNVSQGYLGDPEKTNEAFPVAPRWLSQLRKSPTRVYRTGDLVRFNTSTGTIHFVGRKDNQIKFHGQRIELGDIEHHAQQAFSNASMVIVDLITPEQPQQPYIVAFVHQADTRTGTADPIDTILLPPSESFRADAIGAQNHMHKRLPHYMVPTAFLPLHRLPLSGTGKADRKRLRQCALSLSSLELNAYRATASAKRMPFTAAECKMQELVATVLGRDMSEIGMDDSFFYLGGDSIQAMRLVSEGRQQGLTLSLQAIFDAPRLGDLAYRTANLVRVSEPAPPTLPATSSDDCDHKETIVAALPIKKTDVAEVLPTTSFQRTWLDSQLKSYIVVDIPGPIDLARLRTAIQRVVKAHPILRASFVPYETTTMQVILRTAVVITEADLSTTTVEGICRKDANAPMAPGTPYLRVILATQGEVDRKLIMRLSHAQYDGISLSLLMNDLSHAYASESRPLPSSHLPAFNDYITYQQTQGADPTATTFWHRLLKDVPITYLDLQPAETPTSNGSLITRTRDINIAAFPSLPNGITTATAVKAAWSLVLAQKTGSLAVIFGQVVHGRGIALTGVEGIVGPCANITPVVARLGPQTTRMELMQTLQDQHRSAMPYETVSLDDALAYTKDSQAGRKELQTIVQHQNNVMADDMELSLGEARCRVDLRAVDHVPQEVWVYSSIDGGRPGMLEVKIMSSTLVLSEEVAEELMDLLVEMMKRLFSDPEGVCV</sequence>
<protein>
    <recommendedName>
        <fullName evidence="9">Malformin synthetase mlfA</fullName>
        <ecNumber evidence="8">6.3.2.-</ecNumber>
    </recommendedName>
    <alternativeName>
        <fullName evidence="9">Malformin biosynthesis cluster protein A</fullName>
    </alternativeName>
    <alternativeName>
        <fullName evidence="9">Nonribosomal peptide synthetase mlfA</fullName>
    </alternativeName>
</protein>
<accession>A0A319A6V2</accession>
<comment type="function">
    <text evidence="8 11">Nonribosomal peptide synthetase; part of the gene cluster that mediates the biosynthesis of malformins, cyclic pentapeptides with a disulfide bond between 2 consecutive cysteins, that show potential anti-tumor as well as antimalarial and antitrypanosomal properties (PubMed:30560908). The nonribosomal peptide synthetase mlfA is responsible of the formation of the cyclic pentapeptide (Probable). The malformin biosynthesis clusters in malformin-producing fungi also contain enzymes involved in the formation of the disulfide bond between the two consecutive cysteins within malformins, in addition to additional tailoring enzymes such as methyltransferases or oxidoreductases. They are also composed of up to 4 major facilitator superfamily transporters, and transcription factors probably involved in the regulation of the expression of those clusters (Probable).</text>
</comment>
<comment type="pathway">
    <text evidence="11">Secondary metabolite biosynthesis.</text>
</comment>
<comment type="domain">
    <text evidence="11">NRP synthetases are composed of discrete domains (adenylation (A), thiolation (T) or peptidyl carrier protein (PCP) and condensation (C) domains) which when grouped together are referred to as a single module. Each module is responsible for the recognition (via the A domain) and incorporation of a single amino acid into the growing peptide product. Thus, an NRP synthetase is generally composed of one or more modules and can terminate in a thioesterase domain (TE) that releases the newly synthesized peptide from the enzyme. Occasionally, epimerase (E) domains (responsible for L- to D- amino acid conversion) are present within the NRP synthetase. MlfA has the following architecture: A-T-C-A-T-C-A-T-C-C-A-T-C, with the functions of the five condensation domains during malformin biosynthesis being DL-joining (epimerizing subtype), LL-joining, epimerization, DL-joining and cyclizing domain, respectively.</text>
</comment>
<comment type="biotechnology">
    <text evidence="4 5 6 7">Malformins show anti-tumor properties against human colorectal and prostate cancer cells by the inhibition of proliferation and induction of apoptosis through the activation of the p38 signaling pathway (PubMed:26540166, PubMed:26645406, PubMed:28713983). Malformin C has also been shown to exhibit potent antimalarial and antitrypanosomal properties (PubMed:19876076).</text>
</comment>
<comment type="similarity">
    <text evidence="10">Belongs to the NRP synthetase family.</text>
</comment>
<proteinExistence type="evidence at protein level"/>
<name>MLFA_ASPLB</name>
<reference key="1">
    <citation type="journal article" date="2018" name="Nat. Genet.">
        <title>Investigation of inter- and intraspecies variation through genome sequencing of Aspergillus section Nigri.</title>
        <authorList>
            <person name="Vesth T.C."/>
            <person name="Nybo J.L."/>
            <person name="Theobald S."/>
            <person name="Frisvad J.C."/>
            <person name="Larsen T.O."/>
            <person name="Nielsen K.F."/>
            <person name="Hoof J.B."/>
            <person name="Brandl J."/>
            <person name="Salamov A."/>
            <person name="Riley R."/>
            <person name="Gladden J.M."/>
            <person name="Phatale P."/>
            <person name="Nielsen M.T."/>
            <person name="Lyhne E.K."/>
            <person name="Kogle M.E."/>
            <person name="Strasser K."/>
            <person name="McDonnell E."/>
            <person name="Barry K."/>
            <person name="Clum A."/>
            <person name="Chen C."/>
            <person name="LaButti K."/>
            <person name="Haridas S."/>
            <person name="Nolan M."/>
            <person name="Sandor L."/>
            <person name="Kuo A."/>
            <person name="Lipzen A."/>
            <person name="Hainaut M."/>
            <person name="Drula E."/>
            <person name="Tsang A."/>
            <person name="Magnuson J.K."/>
            <person name="Henrissat B."/>
            <person name="Wiebenga A."/>
            <person name="Simmons B.A."/>
            <person name="Maekelae M.R."/>
            <person name="de Vries R.P."/>
            <person name="Grigoriev I.V."/>
            <person name="Mortensen U.H."/>
            <person name="Baker S.E."/>
            <person name="Andersen M.R."/>
        </authorList>
    </citation>
    <scope>NUCLEOTIDE SEQUENCE [LARGE SCALE GENOMIC DNA]</scope>
    <source>
        <strain>CBS 101883</strain>
    </source>
</reference>
<reference key="2">
    <citation type="journal article" date="2009" name="J. Antibiot.">
        <title>Solid-phase synthesis and biological activity of malformin C and its derivatives.</title>
        <authorList>
            <person name="Kojima Y."/>
            <person name="Sunazuka T."/>
            <person name="Nagai K."/>
            <person name="Hirose T."/>
            <person name="Namatame M."/>
            <person name="Ishiyama A."/>
            <person name="Otoguro K."/>
            <person name="Omura S."/>
        </authorList>
    </citation>
    <scope>BIOTECHNOLOGY</scope>
</reference>
<reference key="3">
    <citation type="journal article" date="2015" name="PLoS ONE">
        <title>Study of malformin C, a fungal source cyclic pentapeptide, as an anti-cancer drug.</title>
        <authorList>
            <person name="Wang J."/>
            <person name="Jiang Z."/>
            <person name="Lam W."/>
            <person name="Gullen E.A."/>
            <person name="Yu Z."/>
            <person name="Wei Y."/>
            <person name="Wang L."/>
            <person name="Zeiss C."/>
            <person name="Beck A."/>
            <person name="Cheng E.C."/>
            <person name="Wu C."/>
            <person name="Cheng Y.C."/>
            <person name="Zhang Y."/>
        </authorList>
    </citation>
    <scope>BIOTECHNOLOGY</scope>
</reference>
<reference key="4">
    <citation type="journal article" date="2016" name="Cancer Chemother. Pharmacol.">
        <title>Malformin A1 promotes cell death through induction of apoptosis, necrosis and autophagy in prostate cancer cells.</title>
        <authorList>
            <person name="Liu Y."/>
            <person name="Wang M."/>
            <person name="Wang D."/>
            <person name="Li X."/>
            <person name="Wang W."/>
            <person name="Lou H."/>
            <person name="Yuan H."/>
        </authorList>
    </citation>
    <scope>BIOTECHNOLOGY</scope>
</reference>
<reference key="5">
    <citation type="journal article" date="2017" name="Int. J. Oncol.">
        <title>Malformin A1 treatment alters invasive and oncogenic phenotypes of human colorectal cancer cells through stimulation of the p38 signaling pathway.</title>
        <authorList>
            <person name="Park S.Y."/>
            <person name="Oh H.H."/>
            <person name="Park Y.L."/>
            <person name="Yu H.M."/>
            <person name="Myung D.S."/>
            <person name="Cho S.B."/>
            <person name="Lee W.S."/>
            <person name="Park D."/>
            <person name="Joo Y.E."/>
        </authorList>
    </citation>
    <scope>BIOTECHNOLOGY</scope>
</reference>
<reference key="6">
    <citation type="journal article" date="2018" name="Sci. Rep.">
        <title>Uncovering secondary metabolite evolution and biosynthesis using gene cluster networks and genetic dereplication.</title>
        <authorList>
            <person name="Theobald S."/>
            <person name="Vesth T.C."/>
            <person name="Rendsvig J.K."/>
            <person name="Nielsen K.F."/>
            <person name="Riley R."/>
            <person name="de Abreu L.M."/>
            <person name="Salamov A."/>
            <person name="Frisvad J.C."/>
            <person name="Larsen T.O."/>
            <person name="Andersen M.R."/>
            <person name="Hoof J.B."/>
        </authorList>
    </citation>
    <scope>IDENTIFICATION</scope>
    <scope>FUNCTION</scope>
    <scope>PATHWAY</scope>
</reference>
<dbReference type="EC" id="6.3.2.-" evidence="8"/>
<dbReference type="EMBL" id="KZ821353">
    <property type="protein sequence ID" value="PYH55689.1"/>
    <property type="molecule type" value="Genomic_DNA"/>
</dbReference>
<dbReference type="SMR" id="A0A319A6V2"/>
<dbReference type="GO" id="GO:0005737">
    <property type="term" value="C:cytoplasm"/>
    <property type="evidence" value="ECO:0007669"/>
    <property type="project" value="TreeGrafter"/>
</dbReference>
<dbReference type="GO" id="GO:0016874">
    <property type="term" value="F:ligase activity"/>
    <property type="evidence" value="ECO:0007669"/>
    <property type="project" value="UniProtKB-KW"/>
</dbReference>
<dbReference type="GO" id="GO:0031177">
    <property type="term" value="F:phosphopantetheine binding"/>
    <property type="evidence" value="ECO:0007669"/>
    <property type="project" value="InterPro"/>
</dbReference>
<dbReference type="GO" id="GO:0043041">
    <property type="term" value="P:amino acid activation for nonribosomal peptide biosynthetic process"/>
    <property type="evidence" value="ECO:0007669"/>
    <property type="project" value="TreeGrafter"/>
</dbReference>
<dbReference type="GO" id="GO:0044550">
    <property type="term" value="P:secondary metabolite biosynthetic process"/>
    <property type="evidence" value="ECO:0007669"/>
    <property type="project" value="TreeGrafter"/>
</dbReference>
<dbReference type="CDD" id="cd05918">
    <property type="entry name" value="A_NRPS_SidN3_like"/>
    <property type="match status" value="4"/>
</dbReference>
<dbReference type="CDD" id="cd19542">
    <property type="entry name" value="CT_NRPS-like"/>
    <property type="match status" value="2"/>
</dbReference>
<dbReference type="CDD" id="cd19534">
    <property type="entry name" value="E_NRPS"/>
    <property type="match status" value="1"/>
</dbReference>
<dbReference type="CDD" id="cd19545">
    <property type="entry name" value="FUM14_C_NRPS-like"/>
    <property type="match status" value="1"/>
</dbReference>
<dbReference type="FunFam" id="3.30.559.10:FF:000016">
    <property type="entry name" value="Nonribosomal peptide synthase Pes1"/>
    <property type="match status" value="1"/>
</dbReference>
<dbReference type="FunFam" id="3.30.559.30:FF:000002">
    <property type="entry name" value="Nonribosomal peptide synthase Pes1"/>
    <property type="match status" value="1"/>
</dbReference>
<dbReference type="FunFam" id="3.30.300.30:FF:000015">
    <property type="entry name" value="Nonribosomal peptide synthase SidD"/>
    <property type="match status" value="4"/>
</dbReference>
<dbReference type="FunFam" id="3.30.559.30:FF:000003">
    <property type="entry name" value="Nonribosomal peptide synthase SidD"/>
    <property type="match status" value="1"/>
</dbReference>
<dbReference type="FunFam" id="1.10.1200.10:FF:000005">
    <property type="entry name" value="Nonribosomal peptide synthetase 1"/>
    <property type="match status" value="1"/>
</dbReference>
<dbReference type="Gene3D" id="3.30.300.30">
    <property type="match status" value="4"/>
</dbReference>
<dbReference type="Gene3D" id="1.10.1200.10">
    <property type="entry name" value="ACP-like"/>
    <property type="match status" value="4"/>
</dbReference>
<dbReference type="Gene3D" id="3.30.559.10">
    <property type="entry name" value="Chloramphenicol acetyltransferase-like domain"/>
    <property type="match status" value="5"/>
</dbReference>
<dbReference type="Gene3D" id="3.40.50.12780">
    <property type="entry name" value="N-terminal domain of ligase-like"/>
    <property type="match status" value="4"/>
</dbReference>
<dbReference type="Gene3D" id="3.30.559.30">
    <property type="entry name" value="Nonribosomal peptide synthetase, condensation domain"/>
    <property type="match status" value="5"/>
</dbReference>
<dbReference type="InterPro" id="IPR010071">
    <property type="entry name" value="AA_adenyl_dom"/>
</dbReference>
<dbReference type="InterPro" id="IPR036736">
    <property type="entry name" value="ACP-like_sf"/>
</dbReference>
<dbReference type="InterPro" id="IPR045851">
    <property type="entry name" value="AMP-bd_C_sf"/>
</dbReference>
<dbReference type="InterPro" id="IPR020845">
    <property type="entry name" value="AMP-binding_CS"/>
</dbReference>
<dbReference type="InterPro" id="IPR000873">
    <property type="entry name" value="AMP-dep_synth/lig_dom"/>
</dbReference>
<dbReference type="InterPro" id="IPR042099">
    <property type="entry name" value="ANL_N_sf"/>
</dbReference>
<dbReference type="InterPro" id="IPR023213">
    <property type="entry name" value="CAT-like_dom_sf"/>
</dbReference>
<dbReference type="InterPro" id="IPR001242">
    <property type="entry name" value="Condensatn"/>
</dbReference>
<dbReference type="InterPro" id="IPR020806">
    <property type="entry name" value="PKS_PP-bd"/>
</dbReference>
<dbReference type="InterPro" id="IPR009081">
    <property type="entry name" value="PP-bd_ACP"/>
</dbReference>
<dbReference type="InterPro" id="IPR006162">
    <property type="entry name" value="Ppantetheine_attach_site"/>
</dbReference>
<dbReference type="NCBIfam" id="TIGR01733">
    <property type="entry name" value="AA-adenyl-dom"/>
    <property type="match status" value="4"/>
</dbReference>
<dbReference type="NCBIfam" id="NF003417">
    <property type="entry name" value="PRK04813.1"/>
    <property type="match status" value="4"/>
</dbReference>
<dbReference type="PANTHER" id="PTHR45527">
    <property type="entry name" value="NONRIBOSOMAL PEPTIDE SYNTHETASE"/>
    <property type="match status" value="1"/>
</dbReference>
<dbReference type="PANTHER" id="PTHR45527:SF15">
    <property type="entry name" value="NONRIBOSOMAL PEPTIDE SYNTHETASE EASA-RELATED"/>
    <property type="match status" value="1"/>
</dbReference>
<dbReference type="Pfam" id="PF00501">
    <property type="entry name" value="AMP-binding"/>
    <property type="match status" value="4"/>
</dbReference>
<dbReference type="Pfam" id="PF00668">
    <property type="entry name" value="Condensation"/>
    <property type="match status" value="5"/>
</dbReference>
<dbReference type="Pfam" id="PF00550">
    <property type="entry name" value="PP-binding"/>
    <property type="match status" value="4"/>
</dbReference>
<dbReference type="SMART" id="SM00823">
    <property type="entry name" value="PKS_PP"/>
    <property type="match status" value="3"/>
</dbReference>
<dbReference type="SMART" id="SM01294">
    <property type="entry name" value="PKS_PP_betabranch"/>
    <property type="match status" value="1"/>
</dbReference>
<dbReference type="SUPFAM" id="SSF56801">
    <property type="entry name" value="Acetyl-CoA synthetase-like"/>
    <property type="match status" value="4"/>
</dbReference>
<dbReference type="SUPFAM" id="SSF47336">
    <property type="entry name" value="ACP-like"/>
    <property type="match status" value="4"/>
</dbReference>
<dbReference type="SUPFAM" id="SSF52777">
    <property type="entry name" value="CoA-dependent acyltransferases"/>
    <property type="match status" value="10"/>
</dbReference>
<dbReference type="PROSITE" id="PS00455">
    <property type="entry name" value="AMP_BINDING"/>
    <property type="match status" value="3"/>
</dbReference>
<dbReference type="PROSITE" id="PS50075">
    <property type="entry name" value="CARRIER"/>
    <property type="match status" value="4"/>
</dbReference>
<dbReference type="PROSITE" id="PS00012">
    <property type="entry name" value="PHOSPHOPANTETHEINE"/>
    <property type="match status" value="1"/>
</dbReference>
<evidence type="ECO:0000255" key="1"/>
<evidence type="ECO:0000255" key="2">
    <source>
        <dbReference type="PROSITE-ProRule" id="PRU00258"/>
    </source>
</evidence>
<evidence type="ECO:0000256" key="3">
    <source>
        <dbReference type="SAM" id="MobiDB-lite"/>
    </source>
</evidence>
<evidence type="ECO:0000269" key="4">
    <source>
    </source>
</evidence>
<evidence type="ECO:0000269" key="5">
    <source>
    </source>
</evidence>
<evidence type="ECO:0000269" key="6">
    <source>
    </source>
</evidence>
<evidence type="ECO:0000269" key="7">
    <source>
    </source>
</evidence>
<evidence type="ECO:0000269" key="8">
    <source>
    </source>
</evidence>
<evidence type="ECO:0000303" key="9">
    <source>
    </source>
</evidence>
<evidence type="ECO:0000305" key="10"/>
<evidence type="ECO:0000305" key="11">
    <source>
    </source>
</evidence>
<keyword id="KW-0436">Ligase</keyword>
<keyword id="KW-0596">Phosphopantetheine</keyword>
<keyword id="KW-0597">Phosphoprotein</keyword>
<keyword id="KW-0677">Repeat</keyword>
<gene>
    <name evidence="9" type="primary">mlfA</name>
    <name type="ORF">BO96DRAFT_457474</name>
</gene>
<feature type="chain" id="PRO_0000446433" description="Malformin synthetase mlfA">
    <location>
        <begin position="1"/>
        <end position="5068"/>
    </location>
</feature>
<feature type="domain" description="Carrier 1" evidence="2">
    <location>
        <begin position="723"/>
        <end position="799"/>
    </location>
</feature>
<feature type="domain" description="Carrier 2" evidence="2">
    <location>
        <begin position="1823"/>
        <end position="1900"/>
    </location>
</feature>
<feature type="domain" description="Carrier 3" evidence="2">
    <location>
        <begin position="2999"/>
        <end position="3075"/>
    </location>
</feature>
<feature type="domain" description="Carrier 4" evidence="2">
    <location>
        <begin position="4546"/>
        <end position="4622"/>
    </location>
</feature>
<feature type="region of interest" description="Adenylation 1" evidence="1">
    <location>
        <begin position="194"/>
        <end position="585"/>
    </location>
</feature>
<feature type="region of interest" description="Condensation 1" evidence="1">
    <location>
        <begin position="837"/>
        <end position="1268"/>
    </location>
</feature>
<feature type="region of interest" description="Adenylation 2" evidence="1">
    <location>
        <begin position="1296"/>
        <end position="1685"/>
    </location>
</feature>
<feature type="region of interest" description="Disordered" evidence="3">
    <location>
        <begin position="1899"/>
        <end position="1929"/>
    </location>
</feature>
<feature type="region of interest" description="Disordered" evidence="3">
    <location>
        <begin position="1964"/>
        <end position="1994"/>
    </location>
</feature>
<feature type="region of interest" description="Condensation 2" evidence="1">
    <location>
        <begin position="2033"/>
        <end position="2448"/>
    </location>
</feature>
<feature type="region of interest" description="Adenylation 3" evidence="1">
    <location>
        <begin position="2471"/>
        <end position="2863"/>
    </location>
</feature>
<feature type="region of interest" description="Condensation 3" evidence="1">
    <location>
        <begin position="3092"/>
        <end position="3557"/>
    </location>
</feature>
<feature type="region of interest" description="Condensation 4" evidence="1">
    <location>
        <begin position="3578"/>
        <end position="3997"/>
    </location>
</feature>
<feature type="region of interest" description="Adenylation 4" evidence="1">
    <location>
        <begin position="4022"/>
        <end position="4412"/>
    </location>
</feature>
<feature type="region of interest" description="Condensation 5" evidence="1">
    <location>
        <begin position="4659"/>
        <end position="4986"/>
    </location>
</feature>
<feature type="compositionally biased region" description="Low complexity" evidence="3">
    <location>
        <begin position="1904"/>
        <end position="1927"/>
    </location>
</feature>
<feature type="compositionally biased region" description="Low complexity" evidence="3">
    <location>
        <begin position="1965"/>
        <end position="1981"/>
    </location>
</feature>
<feature type="modified residue" description="O-(pantetheine 4'-phosphoryl)serine" evidence="2">
    <location>
        <position position="760"/>
    </location>
</feature>
<feature type="modified residue" description="O-(pantetheine 4'-phosphoryl)serine" evidence="2">
    <location>
        <position position="1860"/>
    </location>
</feature>
<feature type="modified residue" description="O-(pantetheine 4'-phosphoryl)serine" evidence="2">
    <location>
        <position position="3036"/>
    </location>
</feature>
<feature type="modified residue" description="O-(pantetheine 4'-phosphoryl)serine" evidence="2">
    <location>
        <position position="4583"/>
    </location>
</feature>
<organism>
    <name type="scientific">Aspergillus lacticoffeatus (strain CBS 101883)</name>
    <dbReference type="NCBI Taxonomy" id="1450533"/>
    <lineage>
        <taxon>Eukaryota</taxon>
        <taxon>Fungi</taxon>
        <taxon>Dikarya</taxon>
        <taxon>Ascomycota</taxon>
        <taxon>Pezizomycotina</taxon>
        <taxon>Eurotiomycetes</taxon>
        <taxon>Eurotiomycetidae</taxon>
        <taxon>Eurotiales</taxon>
        <taxon>Aspergillaceae</taxon>
        <taxon>Aspergillus</taxon>
        <taxon>Aspergillus subgen. Circumdati</taxon>
    </lineage>
</organism>